<accession>Q5HGT7</accession>
<comment type="function">
    <text evidence="1">The UvrABC repair system catalyzes the recognition and processing of DNA lesions. UvrC both incises the 5' and 3' sides of the lesion. The N-terminal half is responsible for the 3' incision and the C-terminal half is responsible for the 5' incision.</text>
</comment>
<comment type="subunit">
    <text evidence="1">Interacts with UvrB in an incision complex.</text>
</comment>
<comment type="subcellular location">
    <subcellularLocation>
        <location evidence="1">Cytoplasm</location>
    </subcellularLocation>
</comment>
<comment type="similarity">
    <text evidence="1">Belongs to the UvrC family.</text>
</comment>
<dbReference type="EMBL" id="CP000046">
    <property type="protein sequence ID" value="AAW36536.1"/>
    <property type="molecule type" value="Genomic_DNA"/>
</dbReference>
<dbReference type="RefSeq" id="WP_000390529.1">
    <property type="nucleotide sequence ID" value="NZ_JBGOFO010000002.1"/>
</dbReference>
<dbReference type="SMR" id="Q5HGT7"/>
<dbReference type="KEGG" id="sac:SACOL1157"/>
<dbReference type="HOGENOM" id="CLU_014841_3_2_9"/>
<dbReference type="Proteomes" id="UP000000530">
    <property type="component" value="Chromosome"/>
</dbReference>
<dbReference type="GO" id="GO:0005737">
    <property type="term" value="C:cytoplasm"/>
    <property type="evidence" value="ECO:0007669"/>
    <property type="project" value="UniProtKB-SubCell"/>
</dbReference>
<dbReference type="GO" id="GO:0009380">
    <property type="term" value="C:excinuclease repair complex"/>
    <property type="evidence" value="ECO:0007669"/>
    <property type="project" value="InterPro"/>
</dbReference>
<dbReference type="GO" id="GO:0003677">
    <property type="term" value="F:DNA binding"/>
    <property type="evidence" value="ECO:0007669"/>
    <property type="project" value="UniProtKB-UniRule"/>
</dbReference>
<dbReference type="GO" id="GO:0009381">
    <property type="term" value="F:excinuclease ABC activity"/>
    <property type="evidence" value="ECO:0007669"/>
    <property type="project" value="UniProtKB-UniRule"/>
</dbReference>
<dbReference type="GO" id="GO:0006289">
    <property type="term" value="P:nucleotide-excision repair"/>
    <property type="evidence" value="ECO:0007669"/>
    <property type="project" value="UniProtKB-UniRule"/>
</dbReference>
<dbReference type="GO" id="GO:0009432">
    <property type="term" value="P:SOS response"/>
    <property type="evidence" value="ECO:0007669"/>
    <property type="project" value="UniProtKB-UniRule"/>
</dbReference>
<dbReference type="CDD" id="cd10434">
    <property type="entry name" value="GIY-YIG_UvrC_Cho"/>
    <property type="match status" value="1"/>
</dbReference>
<dbReference type="FunFam" id="3.30.420.340:FF:000002">
    <property type="entry name" value="UvrABC system protein C"/>
    <property type="match status" value="1"/>
</dbReference>
<dbReference type="FunFam" id="3.40.1440.10:FF:000001">
    <property type="entry name" value="UvrABC system protein C"/>
    <property type="match status" value="1"/>
</dbReference>
<dbReference type="FunFam" id="4.10.860.10:FF:000007">
    <property type="entry name" value="UvrABC system protein C"/>
    <property type="match status" value="1"/>
</dbReference>
<dbReference type="Gene3D" id="1.10.150.20">
    <property type="entry name" value="5' to 3' exonuclease, C-terminal subdomain"/>
    <property type="match status" value="1"/>
</dbReference>
<dbReference type="Gene3D" id="3.40.1440.10">
    <property type="entry name" value="GIY-YIG endonuclease"/>
    <property type="match status" value="1"/>
</dbReference>
<dbReference type="Gene3D" id="4.10.860.10">
    <property type="entry name" value="UVR domain"/>
    <property type="match status" value="1"/>
</dbReference>
<dbReference type="Gene3D" id="3.30.420.340">
    <property type="entry name" value="UvrC, RNAse H endonuclease domain"/>
    <property type="match status" value="1"/>
</dbReference>
<dbReference type="HAMAP" id="MF_00203">
    <property type="entry name" value="UvrC"/>
    <property type="match status" value="1"/>
</dbReference>
<dbReference type="InterPro" id="IPR000305">
    <property type="entry name" value="GIY-YIG_endonuc"/>
</dbReference>
<dbReference type="InterPro" id="IPR035901">
    <property type="entry name" value="GIY-YIG_endonuc_sf"/>
</dbReference>
<dbReference type="InterPro" id="IPR047296">
    <property type="entry name" value="GIY-YIG_UvrC_Cho"/>
</dbReference>
<dbReference type="InterPro" id="IPR010994">
    <property type="entry name" value="RuvA_2-like"/>
</dbReference>
<dbReference type="InterPro" id="IPR001943">
    <property type="entry name" value="UVR_dom"/>
</dbReference>
<dbReference type="InterPro" id="IPR036876">
    <property type="entry name" value="UVR_dom_sf"/>
</dbReference>
<dbReference type="InterPro" id="IPR050066">
    <property type="entry name" value="UvrABC_protein_C"/>
</dbReference>
<dbReference type="InterPro" id="IPR004791">
    <property type="entry name" value="UvrC"/>
</dbReference>
<dbReference type="InterPro" id="IPR001162">
    <property type="entry name" value="UvrC_RNase_H_dom"/>
</dbReference>
<dbReference type="InterPro" id="IPR038476">
    <property type="entry name" value="UvrC_RNase_H_dom_sf"/>
</dbReference>
<dbReference type="NCBIfam" id="TIGR00194">
    <property type="entry name" value="uvrC"/>
    <property type="match status" value="1"/>
</dbReference>
<dbReference type="PANTHER" id="PTHR30562:SF1">
    <property type="entry name" value="UVRABC SYSTEM PROTEIN C"/>
    <property type="match status" value="1"/>
</dbReference>
<dbReference type="PANTHER" id="PTHR30562">
    <property type="entry name" value="UVRC/OXIDOREDUCTASE"/>
    <property type="match status" value="1"/>
</dbReference>
<dbReference type="Pfam" id="PF01541">
    <property type="entry name" value="GIY-YIG"/>
    <property type="match status" value="1"/>
</dbReference>
<dbReference type="Pfam" id="PF02151">
    <property type="entry name" value="UVR"/>
    <property type="match status" value="1"/>
</dbReference>
<dbReference type="Pfam" id="PF22920">
    <property type="entry name" value="UvrC_RNaseH"/>
    <property type="match status" value="1"/>
</dbReference>
<dbReference type="Pfam" id="PF08459">
    <property type="entry name" value="UvrC_RNaseH_dom"/>
    <property type="match status" value="1"/>
</dbReference>
<dbReference type="SMART" id="SM00465">
    <property type="entry name" value="GIYc"/>
    <property type="match status" value="1"/>
</dbReference>
<dbReference type="SUPFAM" id="SSF46600">
    <property type="entry name" value="C-terminal UvrC-binding domain of UvrB"/>
    <property type="match status" value="1"/>
</dbReference>
<dbReference type="SUPFAM" id="SSF82771">
    <property type="entry name" value="GIY-YIG endonuclease"/>
    <property type="match status" value="1"/>
</dbReference>
<dbReference type="SUPFAM" id="SSF47781">
    <property type="entry name" value="RuvA domain 2-like"/>
    <property type="match status" value="1"/>
</dbReference>
<dbReference type="PROSITE" id="PS50164">
    <property type="entry name" value="GIY_YIG"/>
    <property type="match status" value="1"/>
</dbReference>
<dbReference type="PROSITE" id="PS50151">
    <property type="entry name" value="UVR"/>
    <property type="match status" value="1"/>
</dbReference>
<dbReference type="PROSITE" id="PS50165">
    <property type="entry name" value="UVRC"/>
    <property type="match status" value="1"/>
</dbReference>
<organism>
    <name type="scientific">Staphylococcus aureus (strain COL)</name>
    <dbReference type="NCBI Taxonomy" id="93062"/>
    <lineage>
        <taxon>Bacteria</taxon>
        <taxon>Bacillati</taxon>
        <taxon>Bacillota</taxon>
        <taxon>Bacilli</taxon>
        <taxon>Bacillales</taxon>
        <taxon>Staphylococcaceae</taxon>
        <taxon>Staphylococcus</taxon>
    </lineage>
</organism>
<keyword id="KW-0963">Cytoplasm</keyword>
<keyword id="KW-0227">DNA damage</keyword>
<keyword id="KW-0228">DNA excision</keyword>
<keyword id="KW-0234">DNA repair</keyword>
<keyword id="KW-0267">Excision nuclease</keyword>
<keyword id="KW-0742">SOS response</keyword>
<feature type="chain" id="PRO_0000138336" description="UvrABC system protein C">
    <location>
        <begin position="1"/>
        <end position="593"/>
    </location>
</feature>
<feature type="domain" description="GIY-YIG" evidence="1">
    <location>
        <begin position="17"/>
        <end position="94"/>
    </location>
</feature>
<feature type="domain" description="UVR" evidence="1">
    <location>
        <begin position="199"/>
        <end position="234"/>
    </location>
</feature>
<name>UVRC_STAAC</name>
<sequence length="593" mass="68671">MEDYKQRIKNKLNVVPMEPGCYLMKDRNDQVIYVGKAKKLRNRLRSYFTGAHDAKTTRLVGEIRRFEFIVTSSETESLLLELNLIKQYQPRYNILLKDDKSYPFIKITKEKYPRLLVTRTVKQGTGKYFGPYPNAYSAQETKKLLDRIYPYRKCDKMPDKLCLYYHIGQCLGPCVYDVDLSKYAQMTKEITDFLNGEDKTILKSLEERMLTASESLDFERAKEYRDLIQHIQNLTNKQKIMSSDKTIRDVFGYSVDKGWMCIQVFFIRQGNMIKRDTTMIPLQQTEEEEFYTFIGQFYSLNQHILPKEVHVPRNLDKEMIQSVVDTKIVQPARGPKKDMVDLAAHNAKVSLNNKFELISRDESRTIKAIEELGTQMGIQTPIRIEAFDNSNIQGVDPVSAMVTFVDGKPDKKNYRKYKIKTVKGPDDYKSMREVVRRRYSRVLNEGLPLPDLIIVDGGKGHMNGVIDVLQNELGLDIPVAGLQKNDKHQTSELLYGASAEIVPLKKNSQAFYLLHRIQDEVHRFAITFHRQTRQKTGLKSILDDIDGIGNKRKTLLLRSFGSIKKMKEATLEDFKNIGIPENVAKNLHEQLHK</sequence>
<reference key="1">
    <citation type="journal article" date="2005" name="J. Bacteriol.">
        <title>Insights on evolution of virulence and resistance from the complete genome analysis of an early methicillin-resistant Staphylococcus aureus strain and a biofilm-producing methicillin-resistant Staphylococcus epidermidis strain.</title>
        <authorList>
            <person name="Gill S.R."/>
            <person name="Fouts D.E."/>
            <person name="Archer G.L."/>
            <person name="Mongodin E.F."/>
            <person name="DeBoy R.T."/>
            <person name="Ravel J."/>
            <person name="Paulsen I.T."/>
            <person name="Kolonay J.F."/>
            <person name="Brinkac L.M."/>
            <person name="Beanan M.J."/>
            <person name="Dodson R.J."/>
            <person name="Daugherty S.C."/>
            <person name="Madupu R."/>
            <person name="Angiuoli S.V."/>
            <person name="Durkin A.S."/>
            <person name="Haft D.H."/>
            <person name="Vamathevan J.J."/>
            <person name="Khouri H."/>
            <person name="Utterback T.R."/>
            <person name="Lee C."/>
            <person name="Dimitrov G."/>
            <person name="Jiang L."/>
            <person name="Qin H."/>
            <person name="Weidman J."/>
            <person name="Tran K."/>
            <person name="Kang K.H."/>
            <person name="Hance I.R."/>
            <person name="Nelson K.E."/>
            <person name="Fraser C.M."/>
        </authorList>
    </citation>
    <scope>NUCLEOTIDE SEQUENCE [LARGE SCALE GENOMIC DNA]</scope>
    <source>
        <strain>COL</strain>
    </source>
</reference>
<gene>
    <name evidence="1" type="primary">uvrC</name>
    <name type="ordered locus">SACOL1157</name>
</gene>
<protein>
    <recommendedName>
        <fullName evidence="1">UvrABC system protein C</fullName>
        <shortName evidence="1">Protein UvrC</shortName>
    </recommendedName>
    <alternativeName>
        <fullName evidence="1">Excinuclease ABC subunit C</fullName>
    </alternativeName>
</protein>
<evidence type="ECO:0000255" key="1">
    <source>
        <dbReference type="HAMAP-Rule" id="MF_00203"/>
    </source>
</evidence>
<proteinExistence type="inferred from homology"/>